<keyword id="KW-0687">Ribonucleoprotein</keyword>
<keyword id="KW-0689">Ribosomal protein</keyword>
<accession>A9IU26</accession>
<organism>
    <name type="scientific">Bartonella tribocorum (strain CIP 105476 / IBS 506)</name>
    <dbReference type="NCBI Taxonomy" id="382640"/>
    <lineage>
        <taxon>Bacteria</taxon>
        <taxon>Pseudomonadati</taxon>
        <taxon>Pseudomonadota</taxon>
        <taxon>Alphaproteobacteria</taxon>
        <taxon>Hyphomicrobiales</taxon>
        <taxon>Bartonellaceae</taxon>
        <taxon>Bartonella</taxon>
    </lineage>
</organism>
<proteinExistence type="inferred from homology"/>
<sequence>MAKAATIKIKLLSTADTGFFYVTKKNSRTMTDKMSKRKYDPVVKKHVEFKETKIK</sequence>
<gene>
    <name evidence="1" type="primary">rpmG</name>
    <name type="ordered locus">BT_1132</name>
</gene>
<dbReference type="EMBL" id="AM260525">
    <property type="protein sequence ID" value="CAK01504.1"/>
    <property type="molecule type" value="Genomic_DNA"/>
</dbReference>
<dbReference type="RefSeq" id="WP_004864083.1">
    <property type="nucleotide sequence ID" value="NC_010161.1"/>
</dbReference>
<dbReference type="SMR" id="A9IU26"/>
<dbReference type="GeneID" id="92985523"/>
<dbReference type="KEGG" id="btr:BT_1132"/>
<dbReference type="eggNOG" id="COG0267">
    <property type="taxonomic scope" value="Bacteria"/>
</dbReference>
<dbReference type="HOGENOM" id="CLU_190949_1_1_5"/>
<dbReference type="Proteomes" id="UP000001592">
    <property type="component" value="Chromosome"/>
</dbReference>
<dbReference type="GO" id="GO:0022625">
    <property type="term" value="C:cytosolic large ribosomal subunit"/>
    <property type="evidence" value="ECO:0007669"/>
    <property type="project" value="TreeGrafter"/>
</dbReference>
<dbReference type="GO" id="GO:0003735">
    <property type="term" value="F:structural constituent of ribosome"/>
    <property type="evidence" value="ECO:0007669"/>
    <property type="project" value="InterPro"/>
</dbReference>
<dbReference type="GO" id="GO:0006412">
    <property type="term" value="P:translation"/>
    <property type="evidence" value="ECO:0007669"/>
    <property type="project" value="UniProtKB-UniRule"/>
</dbReference>
<dbReference type="Gene3D" id="2.20.28.120">
    <property type="entry name" value="Ribosomal protein L33"/>
    <property type="match status" value="1"/>
</dbReference>
<dbReference type="HAMAP" id="MF_00294">
    <property type="entry name" value="Ribosomal_bL33"/>
    <property type="match status" value="1"/>
</dbReference>
<dbReference type="InterPro" id="IPR001705">
    <property type="entry name" value="Ribosomal_bL33"/>
</dbReference>
<dbReference type="InterPro" id="IPR018264">
    <property type="entry name" value="Ribosomal_bL33_CS"/>
</dbReference>
<dbReference type="InterPro" id="IPR038584">
    <property type="entry name" value="Ribosomal_bL33_sf"/>
</dbReference>
<dbReference type="InterPro" id="IPR011332">
    <property type="entry name" value="Ribosomal_zn-bd"/>
</dbReference>
<dbReference type="NCBIfam" id="NF001860">
    <property type="entry name" value="PRK00595.1"/>
    <property type="match status" value="1"/>
</dbReference>
<dbReference type="NCBIfam" id="TIGR01023">
    <property type="entry name" value="rpmG_bact"/>
    <property type="match status" value="1"/>
</dbReference>
<dbReference type="PANTHER" id="PTHR15238">
    <property type="entry name" value="54S RIBOSOMAL PROTEIN L39, MITOCHONDRIAL"/>
    <property type="match status" value="1"/>
</dbReference>
<dbReference type="PANTHER" id="PTHR15238:SF1">
    <property type="entry name" value="LARGE RIBOSOMAL SUBUNIT PROTEIN BL33M"/>
    <property type="match status" value="1"/>
</dbReference>
<dbReference type="Pfam" id="PF00471">
    <property type="entry name" value="Ribosomal_L33"/>
    <property type="match status" value="1"/>
</dbReference>
<dbReference type="SUPFAM" id="SSF57829">
    <property type="entry name" value="Zn-binding ribosomal proteins"/>
    <property type="match status" value="1"/>
</dbReference>
<dbReference type="PROSITE" id="PS00582">
    <property type="entry name" value="RIBOSOMAL_L33"/>
    <property type="match status" value="1"/>
</dbReference>
<protein>
    <recommendedName>
        <fullName evidence="1">Large ribosomal subunit protein bL33</fullName>
    </recommendedName>
    <alternativeName>
        <fullName evidence="2">50S ribosomal protein L33</fullName>
    </alternativeName>
</protein>
<feature type="chain" id="PRO_1000078907" description="Large ribosomal subunit protein bL33">
    <location>
        <begin position="1"/>
        <end position="55"/>
    </location>
</feature>
<reference key="1">
    <citation type="journal article" date="2007" name="Nat. Genet.">
        <title>Genomic analysis of Bartonella identifies type IV secretion systems as host adaptability factors.</title>
        <authorList>
            <person name="Saenz H.L."/>
            <person name="Engel P."/>
            <person name="Stoeckli M.C."/>
            <person name="Lanz C."/>
            <person name="Raddatz G."/>
            <person name="Vayssier-Taussat M."/>
            <person name="Birtles R."/>
            <person name="Schuster S.C."/>
            <person name="Dehio C."/>
        </authorList>
    </citation>
    <scope>NUCLEOTIDE SEQUENCE [LARGE SCALE GENOMIC DNA]</scope>
    <source>
        <strain>CIP 105476 / IBS 506</strain>
    </source>
</reference>
<name>RL33_BART1</name>
<comment type="similarity">
    <text evidence="1">Belongs to the bacterial ribosomal protein bL33 family.</text>
</comment>
<evidence type="ECO:0000255" key="1">
    <source>
        <dbReference type="HAMAP-Rule" id="MF_00294"/>
    </source>
</evidence>
<evidence type="ECO:0000305" key="2"/>